<dbReference type="EMBL" id="EF115543">
    <property type="protein sequence ID" value="ABK79589.1"/>
    <property type="molecule type" value="Genomic_DNA"/>
</dbReference>
<dbReference type="SMR" id="A1EA17"/>
<dbReference type="GO" id="GO:0009507">
    <property type="term" value="C:chloroplast"/>
    <property type="evidence" value="ECO:0007669"/>
    <property type="project" value="UniProtKB-SubCell"/>
</dbReference>
<dbReference type="GO" id="GO:1990904">
    <property type="term" value="C:ribonucleoprotein complex"/>
    <property type="evidence" value="ECO:0007669"/>
    <property type="project" value="UniProtKB-KW"/>
</dbReference>
<dbReference type="GO" id="GO:0005840">
    <property type="term" value="C:ribosome"/>
    <property type="evidence" value="ECO:0007669"/>
    <property type="project" value="UniProtKB-KW"/>
</dbReference>
<dbReference type="GO" id="GO:0019843">
    <property type="term" value="F:rRNA binding"/>
    <property type="evidence" value="ECO:0007669"/>
    <property type="project" value="UniProtKB-UniRule"/>
</dbReference>
<dbReference type="GO" id="GO:0003735">
    <property type="term" value="F:structural constituent of ribosome"/>
    <property type="evidence" value="ECO:0007669"/>
    <property type="project" value="InterPro"/>
</dbReference>
<dbReference type="GO" id="GO:0006412">
    <property type="term" value="P:translation"/>
    <property type="evidence" value="ECO:0007669"/>
    <property type="project" value="UniProtKB-UniRule"/>
</dbReference>
<dbReference type="FunFam" id="3.30.70.330:FF:000002">
    <property type="entry name" value="50S ribosomal protein L23, chloroplastic"/>
    <property type="match status" value="1"/>
</dbReference>
<dbReference type="Gene3D" id="3.30.70.330">
    <property type="match status" value="1"/>
</dbReference>
<dbReference type="HAMAP" id="MF_01369_B">
    <property type="entry name" value="Ribosomal_uL23_B"/>
    <property type="match status" value="1"/>
</dbReference>
<dbReference type="InterPro" id="IPR012677">
    <property type="entry name" value="Nucleotide-bd_a/b_plait_sf"/>
</dbReference>
<dbReference type="InterPro" id="IPR013025">
    <property type="entry name" value="Ribosomal_uL23-like"/>
</dbReference>
<dbReference type="InterPro" id="IPR012678">
    <property type="entry name" value="Ribosomal_uL23/eL15/eS24_sf"/>
</dbReference>
<dbReference type="PANTHER" id="PTHR11620">
    <property type="entry name" value="60S RIBOSOMAL PROTEIN L23A"/>
    <property type="match status" value="1"/>
</dbReference>
<dbReference type="Pfam" id="PF00276">
    <property type="entry name" value="Ribosomal_L23"/>
    <property type="match status" value="1"/>
</dbReference>
<dbReference type="SUPFAM" id="SSF54189">
    <property type="entry name" value="Ribosomal proteins S24e, L23 and L15e"/>
    <property type="match status" value="1"/>
</dbReference>
<protein>
    <recommendedName>
        <fullName evidence="2">Large ribosomal subunit protein uL23cz</fullName>
    </recommendedName>
    <alternativeName>
        <fullName>50S ribosomal protein L23-A, chloroplastic</fullName>
    </alternativeName>
</protein>
<sequence length="94" mass="10872">MDNGIKYAVFTEKSLRLLGKNQYTFNVESGFTKTEIKHWVELFFGVKVVAVNSHRLPGKGRRIGPILGHTMHYRRMIIILQPGYSIPLLDREKN</sequence>
<evidence type="ECO:0000250" key="1"/>
<evidence type="ECO:0000305" key="2"/>
<organism>
    <name type="scientific">Agrostis stolonifera</name>
    <name type="common">Creeping bentgrass</name>
    <dbReference type="NCBI Taxonomy" id="63632"/>
    <lineage>
        <taxon>Eukaryota</taxon>
        <taxon>Viridiplantae</taxon>
        <taxon>Streptophyta</taxon>
        <taxon>Embryophyta</taxon>
        <taxon>Tracheophyta</taxon>
        <taxon>Spermatophyta</taxon>
        <taxon>Magnoliopsida</taxon>
        <taxon>Liliopsida</taxon>
        <taxon>Poales</taxon>
        <taxon>Poaceae</taxon>
        <taxon>BOP clade</taxon>
        <taxon>Pooideae</taxon>
        <taxon>Poodae</taxon>
        <taxon>Poeae</taxon>
        <taxon>Poeae Chloroplast Group 1 (Aveneae type)</taxon>
        <taxon>Agrostidodinae</taxon>
        <taxon>Agrostidinae</taxon>
        <taxon>Agrostis</taxon>
    </lineage>
</organism>
<feature type="chain" id="PRO_0000277152" description="Large ribosomal subunit protein uL23cz">
    <location>
        <begin position="1"/>
        <end position="94"/>
    </location>
</feature>
<proteinExistence type="inferred from homology"/>
<gene>
    <name type="primary">rpl23-A</name>
</gene>
<name>RK23A_AGRST</name>
<accession>A1EA17</accession>
<comment type="function">
    <text evidence="1">Binds to 23S rRNA.</text>
</comment>
<comment type="subunit">
    <text evidence="1">Part of the 50S ribosomal subunit.</text>
</comment>
<comment type="subcellular location">
    <subcellularLocation>
        <location>Plastid</location>
        <location>Chloroplast</location>
    </subcellularLocation>
</comment>
<comment type="similarity">
    <text evidence="2">Belongs to the universal ribosomal protein uL23 family.</text>
</comment>
<keyword id="KW-0150">Chloroplast</keyword>
<keyword id="KW-0934">Plastid</keyword>
<keyword id="KW-0687">Ribonucleoprotein</keyword>
<keyword id="KW-0689">Ribosomal protein</keyword>
<keyword id="KW-0694">RNA-binding</keyword>
<keyword id="KW-0699">rRNA-binding</keyword>
<reference key="1">
    <citation type="journal article" date="2007" name="Theor. Appl. Genet.">
        <title>Complete chloroplast genome sequences of Hordeum vulgare, Sorghum bicolor and Agrostis stolonifera, and comparative analyses with other grass genomes.</title>
        <authorList>
            <person name="Saski C."/>
            <person name="Lee S.-B."/>
            <person name="Fjellheim S."/>
            <person name="Guda C."/>
            <person name="Jansen R.K."/>
            <person name="Luo H."/>
            <person name="Tomkins J."/>
            <person name="Rognli O.A."/>
            <person name="Daniell H."/>
            <person name="Clarke J.L."/>
        </authorList>
    </citation>
    <scope>NUCLEOTIDE SEQUENCE [LARGE SCALE GENOMIC DNA]</scope>
    <source>
        <strain>cv. Penn A-4</strain>
    </source>
</reference>
<geneLocation type="chloroplast"/>